<proteinExistence type="inferred from homology"/>
<dbReference type="EMBL" id="CP000387">
    <property type="protein sequence ID" value="ABN45616.1"/>
    <property type="molecule type" value="Genomic_DNA"/>
</dbReference>
<dbReference type="RefSeq" id="WP_011837647.1">
    <property type="nucleotide sequence ID" value="NC_009009.1"/>
</dbReference>
<dbReference type="RefSeq" id="YP_001036166.1">
    <property type="nucleotide sequence ID" value="NC_009009.1"/>
</dbReference>
<dbReference type="SMR" id="A3CR11"/>
<dbReference type="STRING" id="388919.SSA_2254"/>
<dbReference type="KEGG" id="ssa:SSA_2254"/>
<dbReference type="PATRIC" id="fig|388919.9.peg.2137"/>
<dbReference type="eggNOG" id="COG0632">
    <property type="taxonomic scope" value="Bacteria"/>
</dbReference>
<dbReference type="HOGENOM" id="CLU_087936_1_0_9"/>
<dbReference type="OrthoDB" id="5293449at2"/>
<dbReference type="Proteomes" id="UP000002148">
    <property type="component" value="Chromosome"/>
</dbReference>
<dbReference type="GO" id="GO:0005737">
    <property type="term" value="C:cytoplasm"/>
    <property type="evidence" value="ECO:0007669"/>
    <property type="project" value="UniProtKB-SubCell"/>
</dbReference>
<dbReference type="GO" id="GO:0009379">
    <property type="term" value="C:Holliday junction helicase complex"/>
    <property type="evidence" value="ECO:0007669"/>
    <property type="project" value="InterPro"/>
</dbReference>
<dbReference type="GO" id="GO:0048476">
    <property type="term" value="C:Holliday junction resolvase complex"/>
    <property type="evidence" value="ECO:0007669"/>
    <property type="project" value="UniProtKB-UniRule"/>
</dbReference>
<dbReference type="GO" id="GO:0005524">
    <property type="term" value="F:ATP binding"/>
    <property type="evidence" value="ECO:0007669"/>
    <property type="project" value="InterPro"/>
</dbReference>
<dbReference type="GO" id="GO:0000400">
    <property type="term" value="F:four-way junction DNA binding"/>
    <property type="evidence" value="ECO:0007669"/>
    <property type="project" value="UniProtKB-UniRule"/>
</dbReference>
<dbReference type="GO" id="GO:0009378">
    <property type="term" value="F:four-way junction helicase activity"/>
    <property type="evidence" value="ECO:0007669"/>
    <property type="project" value="InterPro"/>
</dbReference>
<dbReference type="GO" id="GO:0006310">
    <property type="term" value="P:DNA recombination"/>
    <property type="evidence" value="ECO:0007669"/>
    <property type="project" value="UniProtKB-UniRule"/>
</dbReference>
<dbReference type="GO" id="GO:0006281">
    <property type="term" value="P:DNA repair"/>
    <property type="evidence" value="ECO:0007669"/>
    <property type="project" value="UniProtKB-UniRule"/>
</dbReference>
<dbReference type="CDD" id="cd14332">
    <property type="entry name" value="UBA_RuvA_C"/>
    <property type="match status" value="1"/>
</dbReference>
<dbReference type="Gene3D" id="1.10.150.20">
    <property type="entry name" value="5' to 3' exonuclease, C-terminal subdomain"/>
    <property type="match status" value="1"/>
</dbReference>
<dbReference type="Gene3D" id="1.10.8.10">
    <property type="entry name" value="DNA helicase RuvA subunit, C-terminal domain"/>
    <property type="match status" value="1"/>
</dbReference>
<dbReference type="Gene3D" id="2.40.50.140">
    <property type="entry name" value="Nucleic acid-binding proteins"/>
    <property type="match status" value="1"/>
</dbReference>
<dbReference type="HAMAP" id="MF_00031">
    <property type="entry name" value="DNA_HJ_migration_RuvA"/>
    <property type="match status" value="1"/>
</dbReference>
<dbReference type="InterPro" id="IPR013849">
    <property type="entry name" value="DNA_helicase_Holl-junc_RuvA_I"/>
</dbReference>
<dbReference type="InterPro" id="IPR003583">
    <property type="entry name" value="Hlx-hairpin-Hlx_DNA-bd_motif"/>
</dbReference>
<dbReference type="InterPro" id="IPR012340">
    <property type="entry name" value="NA-bd_OB-fold"/>
</dbReference>
<dbReference type="InterPro" id="IPR000085">
    <property type="entry name" value="RuvA"/>
</dbReference>
<dbReference type="InterPro" id="IPR010994">
    <property type="entry name" value="RuvA_2-like"/>
</dbReference>
<dbReference type="InterPro" id="IPR011114">
    <property type="entry name" value="RuvA_C"/>
</dbReference>
<dbReference type="InterPro" id="IPR036267">
    <property type="entry name" value="RuvA_C_sf"/>
</dbReference>
<dbReference type="NCBIfam" id="TIGR00084">
    <property type="entry name" value="ruvA"/>
    <property type="match status" value="1"/>
</dbReference>
<dbReference type="Pfam" id="PF14520">
    <property type="entry name" value="HHH_5"/>
    <property type="match status" value="1"/>
</dbReference>
<dbReference type="Pfam" id="PF07499">
    <property type="entry name" value="RuvA_C"/>
    <property type="match status" value="1"/>
</dbReference>
<dbReference type="Pfam" id="PF01330">
    <property type="entry name" value="RuvA_N"/>
    <property type="match status" value="1"/>
</dbReference>
<dbReference type="SMART" id="SM00278">
    <property type="entry name" value="HhH1"/>
    <property type="match status" value="2"/>
</dbReference>
<dbReference type="SUPFAM" id="SSF46929">
    <property type="entry name" value="DNA helicase RuvA subunit, C-terminal domain"/>
    <property type="match status" value="1"/>
</dbReference>
<dbReference type="SUPFAM" id="SSF50249">
    <property type="entry name" value="Nucleic acid-binding proteins"/>
    <property type="match status" value="1"/>
</dbReference>
<dbReference type="SUPFAM" id="SSF47781">
    <property type="entry name" value="RuvA domain 2-like"/>
    <property type="match status" value="1"/>
</dbReference>
<accession>A3CR11</accession>
<feature type="chain" id="PRO_1000002573" description="Holliday junction branch migration complex subunit RuvA">
    <location>
        <begin position="1"/>
        <end position="196"/>
    </location>
</feature>
<feature type="region of interest" description="Domain I" evidence="1">
    <location>
        <begin position="1"/>
        <end position="63"/>
    </location>
</feature>
<feature type="region of interest" description="Domain II" evidence="1">
    <location>
        <begin position="64"/>
        <end position="142"/>
    </location>
</feature>
<feature type="region of interest" description="Flexible linker" evidence="1">
    <location>
        <begin position="143"/>
        <end position="146"/>
    </location>
</feature>
<feature type="region of interest" description="Domain III" evidence="1">
    <location>
        <begin position="147"/>
        <end position="196"/>
    </location>
</feature>
<evidence type="ECO:0000255" key="1">
    <source>
        <dbReference type="HAMAP-Rule" id="MF_00031"/>
    </source>
</evidence>
<protein>
    <recommendedName>
        <fullName evidence="1">Holliday junction branch migration complex subunit RuvA</fullName>
    </recommendedName>
</protein>
<sequence length="196" mass="21526">MYEYFKGIISKITAKYIVLEVNSIGYILHVANPYAYSGQLHQEAKVYVHQVVREDAELLYGFATEEEKQLFLSLISVSGIGPVSALAIIAADDNAGLVQAIEQKNITYLTKFPKIGKKTAQQMVLDLEGKVVAAGSPAESKAPVQTADNQELEEAMEAMLALGYKAAELKKIKKFFEGTTDTAENYIKSALKMLVK</sequence>
<organism>
    <name type="scientific">Streptococcus sanguinis (strain SK36)</name>
    <dbReference type="NCBI Taxonomy" id="388919"/>
    <lineage>
        <taxon>Bacteria</taxon>
        <taxon>Bacillati</taxon>
        <taxon>Bacillota</taxon>
        <taxon>Bacilli</taxon>
        <taxon>Lactobacillales</taxon>
        <taxon>Streptococcaceae</taxon>
        <taxon>Streptococcus</taxon>
    </lineage>
</organism>
<comment type="function">
    <text evidence="1">The RuvA-RuvB-RuvC complex processes Holliday junction (HJ) DNA during genetic recombination and DNA repair, while the RuvA-RuvB complex plays an important role in the rescue of blocked DNA replication forks via replication fork reversal (RFR). RuvA specifically binds to HJ cruciform DNA, conferring on it an open structure. The RuvB hexamer acts as an ATP-dependent pump, pulling dsDNA into and through the RuvAB complex. HJ branch migration allows RuvC to scan DNA until it finds its consensus sequence, where it cleaves and resolves the cruciform DNA.</text>
</comment>
<comment type="subunit">
    <text evidence="1">Homotetramer. Forms an RuvA(8)-RuvB(12)-Holliday junction (HJ) complex. HJ DNA is sandwiched between 2 RuvA tetramers; dsDNA enters through RuvA and exits via RuvB. An RuvB hexamer assembles on each DNA strand where it exits the tetramer. Each RuvB hexamer is contacted by two RuvA subunits (via domain III) on 2 adjacent RuvB subunits; this complex drives branch migration. In the full resolvosome a probable DNA-RuvA(4)-RuvB(12)-RuvC(2) complex forms which resolves the HJ.</text>
</comment>
<comment type="subcellular location">
    <subcellularLocation>
        <location evidence="1">Cytoplasm</location>
    </subcellularLocation>
</comment>
<comment type="domain">
    <text evidence="1">Has three domains with a flexible linker between the domains II and III and assumes an 'L' shape. Domain III is highly mobile and contacts RuvB.</text>
</comment>
<comment type="similarity">
    <text evidence="1">Belongs to the RuvA family.</text>
</comment>
<name>RUVA_STRSV</name>
<gene>
    <name evidence="1" type="primary">ruvA</name>
    <name type="ordered locus">SSA_2254</name>
</gene>
<keyword id="KW-0963">Cytoplasm</keyword>
<keyword id="KW-0227">DNA damage</keyword>
<keyword id="KW-0233">DNA recombination</keyword>
<keyword id="KW-0234">DNA repair</keyword>
<keyword id="KW-0238">DNA-binding</keyword>
<keyword id="KW-1185">Reference proteome</keyword>
<reference key="1">
    <citation type="journal article" date="2007" name="J. Bacteriol.">
        <title>Genome of the opportunistic pathogen Streptococcus sanguinis.</title>
        <authorList>
            <person name="Xu P."/>
            <person name="Alves J.M."/>
            <person name="Kitten T."/>
            <person name="Brown A."/>
            <person name="Chen Z."/>
            <person name="Ozaki L.S."/>
            <person name="Manque P."/>
            <person name="Ge X."/>
            <person name="Serrano M.G."/>
            <person name="Puiu D."/>
            <person name="Hendricks S."/>
            <person name="Wang Y."/>
            <person name="Chaplin M.D."/>
            <person name="Akan D."/>
            <person name="Paik S."/>
            <person name="Peterson D.L."/>
            <person name="Macrina F.L."/>
            <person name="Buck G.A."/>
        </authorList>
    </citation>
    <scope>NUCLEOTIDE SEQUENCE [LARGE SCALE GENOMIC DNA]</scope>
    <source>
        <strain>SK36</strain>
    </source>
</reference>